<protein>
    <recommendedName>
        <fullName evidence="1">Phospho-N-acetylmuramoyl-pentapeptide-transferase</fullName>
        <ecNumber evidence="1">2.7.8.13</ecNumber>
    </recommendedName>
    <alternativeName>
        <fullName evidence="1">UDP-MurNAc-pentapeptide phosphotransferase</fullName>
    </alternativeName>
</protein>
<gene>
    <name evidence="1" type="primary">mraY</name>
    <name type="ordered locus">Rleg2_2597</name>
</gene>
<dbReference type="EC" id="2.7.8.13" evidence="1"/>
<dbReference type="EMBL" id="CP001191">
    <property type="protein sequence ID" value="ACI55868.1"/>
    <property type="molecule type" value="Genomic_DNA"/>
</dbReference>
<dbReference type="RefSeq" id="WP_003593357.1">
    <property type="nucleotide sequence ID" value="NC_011369.1"/>
</dbReference>
<dbReference type="SMR" id="B5ZWJ7"/>
<dbReference type="STRING" id="395492.Rleg2_2597"/>
<dbReference type="KEGG" id="rlt:Rleg2_2597"/>
<dbReference type="eggNOG" id="COG0472">
    <property type="taxonomic scope" value="Bacteria"/>
</dbReference>
<dbReference type="HOGENOM" id="CLU_023982_0_0_5"/>
<dbReference type="UniPathway" id="UPA00219"/>
<dbReference type="Proteomes" id="UP000008330">
    <property type="component" value="Chromosome"/>
</dbReference>
<dbReference type="GO" id="GO:0005886">
    <property type="term" value="C:plasma membrane"/>
    <property type="evidence" value="ECO:0007669"/>
    <property type="project" value="UniProtKB-SubCell"/>
</dbReference>
<dbReference type="GO" id="GO:0046872">
    <property type="term" value="F:metal ion binding"/>
    <property type="evidence" value="ECO:0007669"/>
    <property type="project" value="UniProtKB-KW"/>
</dbReference>
<dbReference type="GO" id="GO:0008963">
    <property type="term" value="F:phospho-N-acetylmuramoyl-pentapeptide-transferase activity"/>
    <property type="evidence" value="ECO:0007669"/>
    <property type="project" value="UniProtKB-UniRule"/>
</dbReference>
<dbReference type="GO" id="GO:0051992">
    <property type="term" value="F:UDP-N-acetylmuramoyl-L-alanyl-D-glutamyl-meso-2,6-diaminopimelyl-D-alanyl-D-alanine:undecaprenyl-phosphate transferase activity"/>
    <property type="evidence" value="ECO:0007669"/>
    <property type="project" value="RHEA"/>
</dbReference>
<dbReference type="GO" id="GO:0051301">
    <property type="term" value="P:cell division"/>
    <property type="evidence" value="ECO:0007669"/>
    <property type="project" value="UniProtKB-KW"/>
</dbReference>
<dbReference type="GO" id="GO:0071555">
    <property type="term" value="P:cell wall organization"/>
    <property type="evidence" value="ECO:0007669"/>
    <property type="project" value="UniProtKB-KW"/>
</dbReference>
<dbReference type="GO" id="GO:0009252">
    <property type="term" value="P:peptidoglycan biosynthetic process"/>
    <property type="evidence" value="ECO:0007669"/>
    <property type="project" value="UniProtKB-UniRule"/>
</dbReference>
<dbReference type="GO" id="GO:0008360">
    <property type="term" value="P:regulation of cell shape"/>
    <property type="evidence" value="ECO:0007669"/>
    <property type="project" value="UniProtKB-KW"/>
</dbReference>
<dbReference type="CDD" id="cd06852">
    <property type="entry name" value="GT_MraY"/>
    <property type="match status" value="1"/>
</dbReference>
<dbReference type="HAMAP" id="MF_00038">
    <property type="entry name" value="MraY"/>
    <property type="match status" value="1"/>
</dbReference>
<dbReference type="InterPro" id="IPR000715">
    <property type="entry name" value="Glycosyl_transferase_4"/>
</dbReference>
<dbReference type="InterPro" id="IPR003524">
    <property type="entry name" value="PNAcMuramoyl-5peptid_Trfase"/>
</dbReference>
<dbReference type="InterPro" id="IPR018480">
    <property type="entry name" value="PNAcMuramoyl-5peptid_Trfase_CS"/>
</dbReference>
<dbReference type="NCBIfam" id="TIGR00445">
    <property type="entry name" value="mraY"/>
    <property type="match status" value="1"/>
</dbReference>
<dbReference type="PANTHER" id="PTHR22926">
    <property type="entry name" value="PHOSPHO-N-ACETYLMURAMOYL-PENTAPEPTIDE-TRANSFERASE"/>
    <property type="match status" value="1"/>
</dbReference>
<dbReference type="PANTHER" id="PTHR22926:SF5">
    <property type="entry name" value="PHOSPHO-N-ACETYLMURAMOYL-PENTAPEPTIDE-TRANSFERASE HOMOLOG"/>
    <property type="match status" value="1"/>
</dbReference>
<dbReference type="Pfam" id="PF00953">
    <property type="entry name" value="Glycos_transf_4"/>
    <property type="match status" value="1"/>
</dbReference>
<dbReference type="Pfam" id="PF10555">
    <property type="entry name" value="MraY_sig1"/>
    <property type="match status" value="1"/>
</dbReference>
<dbReference type="PROSITE" id="PS01347">
    <property type="entry name" value="MRAY_1"/>
    <property type="match status" value="1"/>
</dbReference>
<dbReference type="PROSITE" id="PS01348">
    <property type="entry name" value="MRAY_2"/>
    <property type="match status" value="1"/>
</dbReference>
<organism>
    <name type="scientific">Rhizobium leguminosarum bv. trifolii (strain WSM2304)</name>
    <dbReference type="NCBI Taxonomy" id="395492"/>
    <lineage>
        <taxon>Bacteria</taxon>
        <taxon>Pseudomonadati</taxon>
        <taxon>Pseudomonadota</taxon>
        <taxon>Alphaproteobacteria</taxon>
        <taxon>Hyphomicrobiales</taxon>
        <taxon>Rhizobiaceae</taxon>
        <taxon>Rhizobium/Agrobacterium group</taxon>
        <taxon>Rhizobium</taxon>
    </lineage>
</organism>
<sequence length="366" mass="39050">MLIWLVELSEYFKFLNLFRYITFRTGAALFTSALIVFLFGPTIINSLRIRQGKGQPIRADGPQTHFKKAGTPTMGGLMILAGIVGASLLWADLSNVYVVATLLVTLGFGAIGFYDDYLKVTKQSHMGFSGKARLGIEFVIAGIAVYFMMRTALASGVAGSTFGSSIAFPFFKDFMINIGIMFVVFGGFVIVGAGNAVNLTDGLDGLAIVPVMIAAASFGVIAYLAGNVVFANYLQINFVPGTGELAVVLGAVIGAGLGFLWFNAPPAAIFMGDTGSLALGGTIGTVAVATKHEIVMAIIGGLFVMETLSVIIQVGFFKMTGRRVFLMAPIHHHFEKKGWTESQVVIRFWIIAVGLAMLGLSTLKLR</sequence>
<keyword id="KW-0131">Cell cycle</keyword>
<keyword id="KW-0132">Cell division</keyword>
<keyword id="KW-0997">Cell inner membrane</keyword>
<keyword id="KW-1003">Cell membrane</keyword>
<keyword id="KW-0133">Cell shape</keyword>
<keyword id="KW-0961">Cell wall biogenesis/degradation</keyword>
<keyword id="KW-0460">Magnesium</keyword>
<keyword id="KW-0472">Membrane</keyword>
<keyword id="KW-0479">Metal-binding</keyword>
<keyword id="KW-0573">Peptidoglycan synthesis</keyword>
<keyword id="KW-1185">Reference proteome</keyword>
<keyword id="KW-0808">Transferase</keyword>
<keyword id="KW-0812">Transmembrane</keyword>
<keyword id="KW-1133">Transmembrane helix</keyword>
<reference key="1">
    <citation type="journal article" date="2010" name="Stand. Genomic Sci.">
        <title>Complete genome sequence of Rhizobium leguminosarum bv trifolii strain WSM2304, an effective microsymbiont of the South American clover Trifolium polymorphum.</title>
        <authorList>
            <person name="Reeve W."/>
            <person name="O'Hara G."/>
            <person name="Chain P."/>
            <person name="Ardley J."/>
            <person name="Brau L."/>
            <person name="Nandesena K."/>
            <person name="Tiwari R."/>
            <person name="Malfatti S."/>
            <person name="Kiss H."/>
            <person name="Lapidus A."/>
            <person name="Copeland A."/>
            <person name="Nolan M."/>
            <person name="Land M."/>
            <person name="Ivanova N."/>
            <person name="Mavromatis K."/>
            <person name="Markowitz V."/>
            <person name="Kyrpides N."/>
            <person name="Melino V."/>
            <person name="Denton M."/>
            <person name="Yates R."/>
            <person name="Howieson J."/>
        </authorList>
    </citation>
    <scope>NUCLEOTIDE SEQUENCE [LARGE SCALE GENOMIC DNA]</scope>
    <source>
        <strain>WSM2304</strain>
    </source>
</reference>
<accession>B5ZWJ7</accession>
<name>MRAY_RHILW</name>
<comment type="function">
    <text evidence="1">Catalyzes the initial step of the lipid cycle reactions in the biosynthesis of the cell wall peptidoglycan: transfers peptidoglycan precursor phospho-MurNAc-pentapeptide from UDP-MurNAc-pentapeptide onto the lipid carrier undecaprenyl phosphate, yielding undecaprenyl-pyrophosphoryl-MurNAc-pentapeptide, known as lipid I.</text>
</comment>
<comment type="catalytic activity">
    <reaction evidence="1">
        <text>UDP-N-acetyl-alpha-D-muramoyl-L-alanyl-gamma-D-glutamyl-meso-2,6-diaminopimeloyl-D-alanyl-D-alanine + di-trans,octa-cis-undecaprenyl phosphate = di-trans,octa-cis-undecaprenyl diphospho-N-acetyl-alpha-D-muramoyl-L-alanyl-D-glutamyl-meso-2,6-diaminopimeloyl-D-alanyl-D-alanine + UMP</text>
        <dbReference type="Rhea" id="RHEA:28386"/>
        <dbReference type="ChEBI" id="CHEBI:57865"/>
        <dbReference type="ChEBI" id="CHEBI:60392"/>
        <dbReference type="ChEBI" id="CHEBI:61386"/>
        <dbReference type="ChEBI" id="CHEBI:61387"/>
        <dbReference type="EC" id="2.7.8.13"/>
    </reaction>
</comment>
<comment type="cofactor">
    <cofactor evidence="1">
        <name>Mg(2+)</name>
        <dbReference type="ChEBI" id="CHEBI:18420"/>
    </cofactor>
</comment>
<comment type="pathway">
    <text evidence="1">Cell wall biogenesis; peptidoglycan biosynthesis.</text>
</comment>
<comment type="subcellular location">
    <subcellularLocation>
        <location evidence="1">Cell inner membrane</location>
        <topology evidence="1">Multi-pass membrane protein</topology>
    </subcellularLocation>
</comment>
<comment type="similarity">
    <text evidence="1">Belongs to the glycosyltransferase 4 family. MraY subfamily.</text>
</comment>
<feature type="chain" id="PRO_1000090662" description="Phospho-N-acetylmuramoyl-pentapeptide-transferase">
    <location>
        <begin position="1"/>
        <end position="366"/>
    </location>
</feature>
<feature type="transmembrane region" description="Helical" evidence="1">
    <location>
        <begin position="27"/>
        <end position="47"/>
    </location>
</feature>
<feature type="transmembrane region" description="Helical" evidence="1">
    <location>
        <begin position="71"/>
        <end position="91"/>
    </location>
</feature>
<feature type="transmembrane region" description="Helical" evidence="1">
    <location>
        <begin position="93"/>
        <end position="113"/>
    </location>
</feature>
<feature type="transmembrane region" description="Helical" evidence="1">
    <location>
        <begin position="134"/>
        <end position="154"/>
    </location>
</feature>
<feature type="transmembrane region" description="Helical" evidence="1">
    <location>
        <begin position="174"/>
        <end position="194"/>
    </location>
</feature>
<feature type="transmembrane region" description="Helical" evidence="1">
    <location>
        <begin position="205"/>
        <end position="225"/>
    </location>
</feature>
<feature type="transmembrane region" description="Helical" evidence="1">
    <location>
        <begin position="245"/>
        <end position="265"/>
    </location>
</feature>
<feature type="transmembrane region" description="Helical" evidence="1">
    <location>
        <begin position="268"/>
        <end position="288"/>
    </location>
</feature>
<feature type="transmembrane region" description="Helical" evidence="1">
    <location>
        <begin position="294"/>
        <end position="314"/>
    </location>
</feature>
<feature type="transmembrane region" description="Helical" evidence="1">
    <location>
        <begin position="343"/>
        <end position="363"/>
    </location>
</feature>
<proteinExistence type="inferred from homology"/>
<evidence type="ECO:0000255" key="1">
    <source>
        <dbReference type="HAMAP-Rule" id="MF_00038"/>
    </source>
</evidence>